<gene>
    <name evidence="1" type="primary">pyrB</name>
    <name type="ordered locus">Dtpsy_2893</name>
</gene>
<comment type="function">
    <text evidence="1">Catalyzes the condensation of carbamoyl phosphate and aspartate to form carbamoyl aspartate and inorganic phosphate, the committed step in the de novo pyrimidine nucleotide biosynthesis pathway.</text>
</comment>
<comment type="catalytic activity">
    <reaction evidence="1">
        <text>carbamoyl phosphate + L-aspartate = N-carbamoyl-L-aspartate + phosphate + H(+)</text>
        <dbReference type="Rhea" id="RHEA:20013"/>
        <dbReference type="ChEBI" id="CHEBI:15378"/>
        <dbReference type="ChEBI" id="CHEBI:29991"/>
        <dbReference type="ChEBI" id="CHEBI:32814"/>
        <dbReference type="ChEBI" id="CHEBI:43474"/>
        <dbReference type="ChEBI" id="CHEBI:58228"/>
        <dbReference type="EC" id="2.1.3.2"/>
    </reaction>
</comment>
<comment type="pathway">
    <text evidence="1">Pyrimidine metabolism; UMP biosynthesis via de novo pathway; (S)-dihydroorotate from bicarbonate: step 2/3.</text>
</comment>
<comment type="subunit">
    <text evidence="1">Heterododecamer (2C3:3R2) of six catalytic PyrB chains organized as two trimers (C3), and six regulatory PyrI chains organized as three dimers (R2).</text>
</comment>
<comment type="similarity">
    <text evidence="1">Belongs to the aspartate/ornithine carbamoyltransferase superfamily. ATCase family.</text>
</comment>
<protein>
    <recommendedName>
        <fullName evidence="1">Aspartate carbamoyltransferase catalytic subunit</fullName>
        <ecNumber evidence="1">2.1.3.2</ecNumber>
    </recommendedName>
    <alternativeName>
        <fullName evidence="1">Aspartate transcarbamylase</fullName>
        <shortName evidence="1">ATCase</shortName>
    </alternativeName>
</protein>
<accession>B9MF57</accession>
<dbReference type="EC" id="2.1.3.2" evidence="1"/>
<dbReference type="EMBL" id="CP001392">
    <property type="protein sequence ID" value="ACM34327.1"/>
    <property type="molecule type" value="Genomic_DNA"/>
</dbReference>
<dbReference type="RefSeq" id="WP_011806667.1">
    <property type="nucleotide sequence ID" value="NC_011992.1"/>
</dbReference>
<dbReference type="SMR" id="B9MF57"/>
<dbReference type="KEGG" id="dia:Dtpsy_2893"/>
<dbReference type="eggNOG" id="COG0540">
    <property type="taxonomic scope" value="Bacteria"/>
</dbReference>
<dbReference type="HOGENOM" id="CLU_043846_2_0_4"/>
<dbReference type="UniPathway" id="UPA00070">
    <property type="reaction ID" value="UER00116"/>
</dbReference>
<dbReference type="Proteomes" id="UP000000450">
    <property type="component" value="Chromosome"/>
</dbReference>
<dbReference type="GO" id="GO:0005829">
    <property type="term" value="C:cytosol"/>
    <property type="evidence" value="ECO:0007669"/>
    <property type="project" value="TreeGrafter"/>
</dbReference>
<dbReference type="GO" id="GO:0016597">
    <property type="term" value="F:amino acid binding"/>
    <property type="evidence" value="ECO:0007669"/>
    <property type="project" value="InterPro"/>
</dbReference>
<dbReference type="GO" id="GO:0004070">
    <property type="term" value="F:aspartate carbamoyltransferase activity"/>
    <property type="evidence" value="ECO:0007669"/>
    <property type="project" value="UniProtKB-UniRule"/>
</dbReference>
<dbReference type="GO" id="GO:0006207">
    <property type="term" value="P:'de novo' pyrimidine nucleobase biosynthetic process"/>
    <property type="evidence" value="ECO:0007669"/>
    <property type="project" value="InterPro"/>
</dbReference>
<dbReference type="GO" id="GO:0044205">
    <property type="term" value="P:'de novo' UMP biosynthetic process"/>
    <property type="evidence" value="ECO:0007669"/>
    <property type="project" value="UniProtKB-UniRule"/>
</dbReference>
<dbReference type="GO" id="GO:0006520">
    <property type="term" value="P:amino acid metabolic process"/>
    <property type="evidence" value="ECO:0007669"/>
    <property type="project" value="InterPro"/>
</dbReference>
<dbReference type="FunFam" id="3.40.50.1370:FF:000007">
    <property type="entry name" value="Aspartate carbamoyltransferase"/>
    <property type="match status" value="1"/>
</dbReference>
<dbReference type="Gene3D" id="3.40.50.1370">
    <property type="entry name" value="Aspartate/ornithine carbamoyltransferase"/>
    <property type="match status" value="2"/>
</dbReference>
<dbReference type="HAMAP" id="MF_00001">
    <property type="entry name" value="Asp_carb_tr"/>
    <property type="match status" value="1"/>
</dbReference>
<dbReference type="InterPro" id="IPR006132">
    <property type="entry name" value="Asp/Orn_carbamoyltranf_P-bd"/>
</dbReference>
<dbReference type="InterPro" id="IPR006130">
    <property type="entry name" value="Asp/Orn_carbamoylTrfase"/>
</dbReference>
<dbReference type="InterPro" id="IPR036901">
    <property type="entry name" value="Asp/Orn_carbamoylTrfase_sf"/>
</dbReference>
<dbReference type="InterPro" id="IPR002082">
    <property type="entry name" value="Asp_carbamoyltransf"/>
</dbReference>
<dbReference type="InterPro" id="IPR006131">
    <property type="entry name" value="Asp_carbamoyltransf_Asp/Orn-bd"/>
</dbReference>
<dbReference type="NCBIfam" id="TIGR00670">
    <property type="entry name" value="asp_carb_tr"/>
    <property type="match status" value="1"/>
</dbReference>
<dbReference type="NCBIfam" id="NF002032">
    <property type="entry name" value="PRK00856.1"/>
    <property type="match status" value="1"/>
</dbReference>
<dbReference type="PANTHER" id="PTHR45753:SF6">
    <property type="entry name" value="ASPARTATE CARBAMOYLTRANSFERASE"/>
    <property type="match status" value="1"/>
</dbReference>
<dbReference type="PANTHER" id="PTHR45753">
    <property type="entry name" value="ORNITHINE CARBAMOYLTRANSFERASE, MITOCHONDRIAL"/>
    <property type="match status" value="1"/>
</dbReference>
<dbReference type="Pfam" id="PF00185">
    <property type="entry name" value="OTCace"/>
    <property type="match status" value="1"/>
</dbReference>
<dbReference type="Pfam" id="PF02729">
    <property type="entry name" value="OTCace_N"/>
    <property type="match status" value="1"/>
</dbReference>
<dbReference type="PRINTS" id="PR00100">
    <property type="entry name" value="AOTCASE"/>
</dbReference>
<dbReference type="PRINTS" id="PR00101">
    <property type="entry name" value="ATCASE"/>
</dbReference>
<dbReference type="SUPFAM" id="SSF53671">
    <property type="entry name" value="Aspartate/ornithine carbamoyltransferase"/>
    <property type="match status" value="1"/>
</dbReference>
<dbReference type="PROSITE" id="PS00097">
    <property type="entry name" value="CARBAMOYLTRANSFERASE"/>
    <property type="match status" value="1"/>
</dbReference>
<reference key="1">
    <citation type="submission" date="2009-01" db="EMBL/GenBank/DDBJ databases">
        <title>Complete sequence of Diaphorobacter sp. TPSY.</title>
        <authorList>
            <consortium name="US DOE Joint Genome Institute"/>
            <person name="Lucas S."/>
            <person name="Copeland A."/>
            <person name="Lapidus A."/>
            <person name="Glavina del Rio T."/>
            <person name="Tice H."/>
            <person name="Bruce D."/>
            <person name="Goodwin L."/>
            <person name="Pitluck S."/>
            <person name="Chertkov O."/>
            <person name="Brettin T."/>
            <person name="Detter J.C."/>
            <person name="Han C."/>
            <person name="Larimer F."/>
            <person name="Land M."/>
            <person name="Hauser L."/>
            <person name="Kyrpides N."/>
            <person name="Mikhailova N."/>
            <person name="Coates J.D."/>
        </authorList>
    </citation>
    <scope>NUCLEOTIDE SEQUENCE [LARGE SCALE GENOMIC DNA]</scope>
    <source>
        <strain>TPSY</strain>
    </source>
</reference>
<organism>
    <name type="scientific">Acidovorax ebreus (strain TPSY)</name>
    <name type="common">Diaphorobacter sp. (strain TPSY)</name>
    <dbReference type="NCBI Taxonomy" id="535289"/>
    <lineage>
        <taxon>Bacteria</taxon>
        <taxon>Pseudomonadati</taxon>
        <taxon>Pseudomonadota</taxon>
        <taxon>Betaproteobacteria</taxon>
        <taxon>Burkholderiales</taxon>
        <taxon>Comamonadaceae</taxon>
        <taxon>Diaphorobacter</taxon>
    </lineage>
</organism>
<sequence length="320" mass="35007">MLYKRNPQLNKNGELIHLLSIEGLPKDIVTHILDTATNFVSVQEREVKKVPLLRGKSVFNLFFENSTRTRTTFEIAAKRLSADVFNLDIARSSTAKGETLLDTIDNLSAMAADIFVVRHSESGAPYLIAQHVAPHVHVVNAGDGRHSHPTQGLLDMYTIRHYKKDFSNLTVAIVGDVLHSRVARSDIHALTTLGAAEVRVVGPRTLVPSDMAQMGVRVFHNLEEGIKGCDVVITLRLQNERMSGALLPSSQEYFKSFGLTPEKLRLAKPDAIVMHPGPINRGVEIDSAVVDGPQAVILPQVTFGIAVRMAVMSIVAGNEA</sequence>
<feature type="chain" id="PRO_1000116139" description="Aspartate carbamoyltransferase catalytic subunit">
    <location>
        <begin position="1"/>
        <end position="320"/>
    </location>
</feature>
<feature type="binding site" evidence="1">
    <location>
        <position position="68"/>
    </location>
    <ligand>
        <name>carbamoyl phosphate</name>
        <dbReference type="ChEBI" id="CHEBI:58228"/>
    </ligand>
</feature>
<feature type="binding site" evidence="1">
    <location>
        <position position="69"/>
    </location>
    <ligand>
        <name>carbamoyl phosphate</name>
        <dbReference type="ChEBI" id="CHEBI:58228"/>
    </ligand>
</feature>
<feature type="binding site" evidence="1">
    <location>
        <position position="96"/>
    </location>
    <ligand>
        <name>L-aspartate</name>
        <dbReference type="ChEBI" id="CHEBI:29991"/>
    </ligand>
</feature>
<feature type="binding site" evidence="1">
    <location>
        <position position="118"/>
    </location>
    <ligand>
        <name>carbamoyl phosphate</name>
        <dbReference type="ChEBI" id="CHEBI:58228"/>
    </ligand>
</feature>
<feature type="binding site" evidence="1">
    <location>
        <position position="148"/>
    </location>
    <ligand>
        <name>carbamoyl phosphate</name>
        <dbReference type="ChEBI" id="CHEBI:58228"/>
    </ligand>
</feature>
<feature type="binding site" evidence="1">
    <location>
        <position position="151"/>
    </location>
    <ligand>
        <name>carbamoyl phosphate</name>
        <dbReference type="ChEBI" id="CHEBI:58228"/>
    </ligand>
</feature>
<feature type="binding site" evidence="1">
    <location>
        <position position="181"/>
    </location>
    <ligand>
        <name>L-aspartate</name>
        <dbReference type="ChEBI" id="CHEBI:29991"/>
    </ligand>
</feature>
<feature type="binding site" evidence="1">
    <location>
        <position position="236"/>
    </location>
    <ligand>
        <name>L-aspartate</name>
        <dbReference type="ChEBI" id="CHEBI:29991"/>
    </ligand>
</feature>
<feature type="binding site" evidence="1">
    <location>
        <position position="277"/>
    </location>
    <ligand>
        <name>carbamoyl phosphate</name>
        <dbReference type="ChEBI" id="CHEBI:58228"/>
    </ligand>
</feature>
<feature type="binding site" evidence="1">
    <location>
        <position position="278"/>
    </location>
    <ligand>
        <name>carbamoyl phosphate</name>
        <dbReference type="ChEBI" id="CHEBI:58228"/>
    </ligand>
</feature>
<name>PYRB_ACIET</name>
<keyword id="KW-0665">Pyrimidine biosynthesis</keyword>
<keyword id="KW-1185">Reference proteome</keyword>
<keyword id="KW-0808">Transferase</keyword>
<proteinExistence type="inferred from homology"/>
<evidence type="ECO:0000255" key="1">
    <source>
        <dbReference type="HAMAP-Rule" id="MF_00001"/>
    </source>
</evidence>